<keyword id="KW-1003">Cell membrane</keyword>
<keyword id="KW-0970">Cilium biogenesis/degradation</keyword>
<keyword id="KW-0963">Cytoplasm</keyword>
<keyword id="KW-0206">Cytoskeleton</keyword>
<keyword id="KW-0472">Membrane</keyword>
<keyword id="KW-0539">Nucleus</keyword>
<keyword id="KW-1185">Reference proteome</keyword>
<sequence length="376" mass="41982">MEPENAQGKSPAENEQEVVPDVASAMSASSEALEFLCSVGLEELNLCLFTDSLATVSVSGVELGNFAVSVQPAYYQLDGLEEEKCFLVHAASQGTIDGVPCGTSIIGHISYKLETLEQHVHEYVKLKGHSLDKKTQIVRQGDKLVINRIITEGEKLHRETSSHSTSLLSGLISEAANLLIMRILARRKIKDPLKFLAFDEEGNLCTSTYAPLGSQAQVIGKEMVDVFGIERTIHSPEVPTTWQCFFLSDGHLASHVQIGSPVTIKLNEMPVLSEPDEKDPKPVFEKKPLAWQEDLQLHSEFLDRKEELISDHETYLRRHPEVKVLLADFMQFLLLRKPDDIMDFAAEYFKPFSSTQEPNDPFVSSHHASPFRNVSH</sequence>
<evidence type="ECO:0000250" key="1">
    <source>
        <dbReference type="UniProtKB" id="Q7Z7H3"/>
    </source>
</evidence>
<evidence type="ECO:0000256" key="2">
    <source>
        <dbReference type="SAM" id="MobiDB-lite"/>
    </source>
</evidence>
<evidence type="ECO:0000305" key="3"/>
<organism>
    <name type="scientific">Xenopus laevis</name>
    <name type="common">African clawed frog</name>
    <dbReference type="NCBI Taxonomy" id="8355"/>
    <lineage>
        <taxon>Eukaryota</taxon>
        <taxon>Metazoa</taxon>
        <taxon>Chordata</taxon>
        <taxon>Craniata</taxon>
        <taxon>Vertebrata</taxon>
        <taxon>Euteleostomi</taxon>
        <taxon>Amphibia</taxon>
        <taxon>Batrachia</taxon>
        <taxon>Anura</taxon>
        <taxon>Pipoidea</taxon>
        <taxon>Pipidae</taxon>
        <taxon>Xenopodinae</taxon>
        <taxon>Xenopus</taxon>
        <taxon>Xenopus</taxon>
    </lineage>
</organism>
<name>CATIP_XENLA</name>
<feature type="chain" id="PRO_0000391709" description="Ciliogenesis-associated TTC17-interacting protein">
    <location>
        <begin position="1"/>
        <end position="376"/>
    </location>
</feature>
<feature type="region of interest" description="Disordered" evidence="2">
    <location>
        <begin position="355"/>
        <end position="376"/>
    </location>
</feature>
<proteinExistence type="evidence at transcript level"/>
<reference key="1">
    <citation type="submission" date="2006-09" db="EMBL/GenBank/DDBJ databases">
        <authorList>
            <consortium name="NIH - Xenopus Gene Collection (XGC) project"/>
        </authorList>
    </citation>
    <scope>NUCLEOTIDE SEQUENCE [LARGE SCALE MRNA]</scope>
    <source>
        <tissue>Testis</tissue>
    </source>
</reference>
<comment type="function">
    <text evidence="1">Plays a role in primary ciliogenesis by modulating actin polymerization.</text>
</comment>
<comment type="subcellular location">
    <subcellularLocation>
        <location evidence="1">Nucleus</location>
    </subcellularLocation>
    <subcellularLocation>
        <location evidence="1">Cytoplasm</location>
    </subcellularLocation>
    <subcellularLocation>
        <location evidence="1">Cell membrane</location>
    </subcellularLocation>
    <subcellularLocation>
        <location evidence="1">Cytoplasm</location>
        <location evidence="1">Cytoskeleton</location>
    </subcellularLocation>
</comment>
<comment type="similarity">
    <text evidence="3">Belongs to the CATIP family.</text>
</comment>
<accession>Q0IHI3</accession>
<protein>
    <recommendedName>
        <fullName>Ciliogenesis-associated TTC17-interacting protein</fullName>
    </recommendedName>
</protein>
<dbReference type="EMBL" id="BC123143">
    <property type="protein sequence ID" value="AAI23144.1"/>
    <property type="molecule type" value="mRNA"/>
</dbReference>
<dbReference type="RefSeq" id="NP_001090309.1">
    <property type="nucleotide sequence ID" value="NM_001096840.1"/>
</dbReference>
<dbReference type="SMR" id="Q0IHI3"/>
<dbReference type="GeneID" id="779218"/>
<dbReference type="KEGG" id="xla:779218"/>
<dbReference type="AGR" id="Xenbase:XB-GENE-942709"/>
<dbReference type="CTD" id="779218"/>
<dbReference type="Xenbase" id="XB-GENE-942709">
    <property type="gene designation" value="catip.L"/>
</dbReference>
<dbReference type="OrthoDB" id="6334211at2759"/>
<dbReference type="Proteomes" id="UP000186698">
    <property type="component" value="Chromosome 9_10L"/>
</dbReference>
<dbReference type="Bgee" id="779218">
    <property type="expression patterns" value="Expressed in testis and 8 other cell types or tissues"/>
</dbReference>
<dbReference type="GO" id="GO:0015629">
    <property type="term" value="C:actin cytoskeleton"/>
    <property type="evidence" value="ECO:0000250"/>
    <property type="project" value="UniProtKB"/>
</dbReference>
<dbReference type="GO" id="GO:0005737">
    <property type="term" value="C:cytoplasm"/>
    <property type="evidence" value="ECO:0000250"/>
    <property type="project" value="UniProtKB"/>
</dbReference>
<dbReference type="GO" id="GO:0005634">
    <property type="term" value="C:nucleus"/>
    <property type="evidence" value="ECO:0000250"/>
    <property type="project" value="UniProtKB"/>
</dbReference>
<dbReference type="GO" id="GO:0005886">
    <property type="term" value="C:plasma membrane"/>
    <property type="evidence" value="ECO:0000250"/>
    <property type="project" value="UniProtKB"/>
</dbReference>
<dbReference type="GO" id="GO:0030041">
    <property type="term" value="P:actin filament polymerization"/>
    <property type="evidence" value="ECO:0000250"/>
    <property type="project" value="UniProtKB"/>
</dbReference>
<dbReference type="GO" id="GO:0044782">
    <property type="term" value="P:cilium organization"/>
    <property type="evidence" value="ECO:0000250"/>
    <property type="project" value="UniProtKB"/>
</dbReference>
<dbReference type="CDD" id="cd22973">
    <property type="entry name" value="DD_CATIP"/>
    <property type="match status" value="1"/>
</dbReference>
<dbReference type="Gene3D" id="1.20.890.10">
    <property type="entry name" value="cAMP-dependent protein kinase regulatory subunit, dimerization-anchoring domain"/>
    <property type="match status" value="1"/>
</dbReference>
<dbReference type="InterPro" id="IPR048777">
    <property type="entry name" value="CATIP_N"/>
</dbReference>
<dbReference type="InterPro" id="IPR047501">
    <property type="entry name" value="DD_CATIP"/>
</dbReference>
<dbReference type="PANTHER" id="PTHR15505:SF3">
    <property type="entry name" value="CILIOGENESIS-ASSOCIATED TTC17-INTERACTING PROTEIN"/>
    <property type="match status" value="1"/>
</dbReference>
<dbReference type="PANTHER" id="PTHR15505">
    <property type="entry name" value="RIIA DOMAIN-CONTAINING PROTEIN 1"/>
    <property type="match status" value="1"/>
</dbReference>
<dbReference type="Pfam" id="PF21772">
    <property type="entry name" value="CATIP_N"/>
    <property type="match status" value="1"/>
</dbReference>
<dbReference type="SUPFAM" id="SSF47391">
    <property type="entry name" value="Dimerization-anchoring domain of cAMP-dependent PK regulatory subunit"/>
    <property type="match status" value="1"/>
</dbReference>
<gene>
    <name type="primary">catip</name>
</gene>